<reference key="1">
    <citation type="journal article" date="1997" name="Plant Mol. Biol.">
        <title>Potato cysteine proteinase inhibitor gene family: molecular cloning, characterisation and immunocytochemical localisation studies.</title>
        <authorList>
            <person name="Gruden K."/>
            <person name="Strukelj B."/>
            <person name="Ravnikar M."/>
            <person name="Poljsak-Prijatelj M."/>
            <person name="Mavric I."/>
            <person name="Brzin J."/>
            <person name="Pungercar J."/>
            <person name="Kregar I."/>
        </authorList>
    </citation>
    <scope>NUCLEOTIDE SEQUENCE [MRNA]</scope>
    <source>
        <strain>cv. Ulster Sceptre</strain>
        <tissue>Tuber</tissue>
    </source>
</reference>
<comment type="function">
    <text>Probable inhibitor of cysteine proteases. May protect the plant by inhibiting proteases of invading organisms.</text>
</comment>
<comment type="subcellular location">
    <subcellularLocation>
        <location evidence="1">Vacuole</location>
    </subcellularLocation>
</comment>
<comment type="similarity">
    <text evidence="2">Belongs to the protease inhibitor I3 (leguminous Kunitz-type inhibitor) family.</text>
</comment>
<sequence length="186" mass="20962">TCHDDDNLVLPEVYDQDGNPLRIGERYIIKNPLLGAGAVYLDNIGNLQCPNAVLQHMSIPQFLGKGTPVVFIRKSESDYGDVVRLMTAVYIKFFVKTTKLCVDETVWKVNNEQLVVTGGNVGNENDIFKIKKTDLVIRGMKNVYKLLHCPSHLECKNIGSNFKNGYPRLVTVNDEKDFIPFVFIKA</sequence>
<evidence type="ECO:0000250" key="1"/>
<evidence type="ECO:0000305" key="2"/>
<proteinExistence type="evidence at transcript level"/>
<accession>O24383</accession>
<feature type="signal peptide" evidence="1">
    <location>
        <begin position="1" status="less than"/>
        <end position="7"/>
    </location>
</feature>
<feature type="chain" id="PRO_0000016930" description="Cysteine protease inhibitor 10">
    <location>
        <begin position="8"/>
        <end position="186"/>
    </location>
</feature>
<feature type="disulfide bond" evidence="1">
    <location>
        <begin position="49"/>
        <end position="101"/>
    </location>
</feature>
<feature type="disulfide bond" evidence="1">
    <location>
        <begin position="149"/>
        <end position="155"/>
    </location>
</feature>
<feature type="non-terminal residue">
    <location>
        <position position="1"/>
    </location>
</feature>
<organism>
    <name type="scientific">Solanum tuberosum</name>
    <name type="common">Potato</name>
    <dbReference type="NCBI Taxonomy" id="4113"/>
    <lineage>
        <taxon>Eukaryota</taxon>
        <taxon>Viridiplantae</taxon>
        <taxon>Streptophyta</taxon>
        <taxon>Embryophyta</taxon>
        <taxon>Tracheophyta</taxon>
        <taxon>Spermatophyta</taxon>
        <taxon>Magnoliopsida</taxon>
        <taxon>eudicotyledons</taxon>
        <taxon>Gunneridae</taxon>
        <taxon>Pentapetalae</taxon>
        <taxon>asterids</taxon>
        <taxon>lamiids</taxon>
        <taxon>Solanales</taxon>
        <taxon>Solanaceae</taxon>
        <taxon>Solanoideae</taxon>
        <taxon>Solaneae</taxon>
        <taxon>Solanum</taxon>
    </lineage>
</organism>
<keyword id="KW-1015">Disulfide bond</keyword>
<keyword id="KW-0646">Protease inhibitor</keyword>
<keyword id="KW-1185">Reference proteome</keyword>
<keyword id="KW-0732">Signal</keyword>
<keyword id="KW-0789">Thiol protease inhibitor</keyword>
<keyword id="KW-0926">Vacuole</keyword>
<protein>
    <recommendedName>
        <fullName>Cysteine protease inhibitor 10</fullName>
    </recommendedName>
    <alternativeName>
        <fullName>PCPI-10</fullName>
        <shortName>Pcpi10</shortName>
    </alternativeName>
</protein>
<name>CPI10_SOLTU</name>
<dbReference type="EMBL" id="U59272">
    <property type="protein sequence ID" value="AAB63099.1"/>
    <property type="molecule type" value="mRNA"/>
</dbReference>
<dbReference type="PIR" id="T07746">
    <property type="entry name" value="T07746"/>
</dbReference>
<dbReference type="SMR" id="O24383"/>
<dbReference type="STRING" id="4113.O24383"/>
<dbReference type="Allergome" id="1669">
    <property type="allergen name" value="Sola t 3.0101"/>
</dbReference>
<dbReference type="Allergome" id="641">
    <property type="allergen name" value="Sola t 3"/>
</dbReference>
<dbReference type="MEROPS" id="I03.017"/>
<dbReference type="ProMEX" id="O24383"/>
<dbReference type="InParanoid" id="O24383"/>
<dbReference type="Proteomes" id="UP000011115">
    <property type="component" value="Unassembled WGS sequence"/>
</dbReference>
<dbReference type="ExpressionAtlas" id="O24383">
    <property type="expression patterns" value="baseline and differential"/>
</dbReference>
<dbReference type="GO" id="GO:0005773">
    <property type="term" value="C:vacuole"/>
    <property type="evidence" value="ECO:0007669"/>
    <property type="project" value="UniProtKB-SubCell"/>
</dbReference>
<dbReference type="GO" id="GO:0004869">
    <property type="term" value="F:cysteine-type endopeptidase inhibitor activity"/>
    <property type="evidence" value="ECO:0007669"/>
    <property type="project" value="UniProtKB-KW"/>
</dbReference>
<dbReference type="CDD" id="cd23372">
    <property type="entry name" value="beta-trefoil_STI_CPI-like"/>
    <property type="match status" value="1"/>
</dbReference>
<dbReference type="Gene3D" id="2.80.10.50">
    <property type="match status" value="1"/>
</dbReference>
<dbReference type="InterPro" id="IPR011065">
    <property type="entry name" value="Kunitz_inhibitor_STI-like_sf"/>
</dbReference>
<dbReference type="InterPro" id="IPR002160">
    <property type="entry name" value="Prot_inh_Kunz-lg"/>
</dbReference>
<dbReference type="PANTHER" id="PTHR33107:SF44">
    <property type="entry name" value="CYSTEINE PROTEASE INHIBITOR 1"/>
    <property type="match status" value="1"/>
</dbReference>
<dbReference type="PANTHER" id="PTHR33107">
    <property type="entry name" value="KUNITZ TRYPSIN INHIBITOR 2"/>
    <property type="match status" value="1"/>
</dbReference>
<dbReference type="Pfam" id="PF00197">
    <property type="entry name" value="Kunitz_legume"/>
    <property type="match status" value="1"/>
</dbReference>
<dbReference type="SMART" id="SM00452">
    <property type="entry name" value="STI"/>
    <property type="match status" value="1"/>
</dbReference>
<dbReference type="SUPFAM" id="SSF50386">
    <property type="entry name" value="STI-like"/>
    <property type="match status" value="1"/>
</dbReference>
<dbReference type="PROSITE" id="PS00283">
    <property type="entry name" value="SOYBEAN_KUNITZ"/>
    <property type="match status" value="1"/>
</dbReference>